<comment type="function">
    <text evidence="2 3">Small GTPase which cycles between active GTP-bound and inactive GDP-bound states. In its active state, binds to a variety of effector proteins playing a key role in the regulation of lysosomal positioning which is important for nutrient sensing, natural killer cell-mediated cytotoxicity and antigen presentation. Along with its effectors, orchestrates lysosomal transport and fusion. Localizes specifically to lysosomal membranes and mediates anterograde lysosomal motility by recruiting PLEKHM2, which in turn recruits the motor protein kinesin-1 on lysosomes. Required for lysosomal and cytolytic granule exocytosis. Critical factor involved in NK cell-mediated cytotoxicity. Drives the polarization of cytolytic granules and microtubule-organizing centers (MTOCs) toward the immune synapse between effector NK lymphocytes and target cells (By similarity). In neurons, mediates the anterograde axonal long-range transport of presynaptic lysosome-related vesicles required for presynaptic biogenesis and synaptic function (By similarity). Also acts as a regulator of endosome to lysosome trafficking pathways of special significance for host defense (By similarity). Recruits RUFY1 onto early endosomes regulating endosomes to trans-Golgi network proteins retrieval (By similarity). Regulates cargo trafficking to lysosomes by binding to PLEKHM1 and recruiting the HOPS subunit VPS41, resulting in functional assembly of the HOPS complex on lysosomal membranes. Plays an important role in cargo delivery to lysosomes for antigen presentation and microbial killing. Directs the intersection of CD1d with lipid antigens in lysosomes, and plays a role in intersecting phagosomes with lysosomes to generate phagolysosomes that kill microbes (By similarity). Involved in the process of MHC II presentation. Regulates the delivery of antigens to lysosomes and the formation of MHC II-peptide complexes through the recruitment of the HOPS complex to lysosomes allowing the fusion of late endosomes to lysosomes (By similarity). May play a role in chromosome segregation (By similarity).</text>
</comment>
<comment type="catalytic activity">
    <reaction evidence="3">
        <text>GTP + H2O = GDP + phosphate + H(+)</text>
        <dbReference type="Rhea" id="RHEA:19669"/>
        <dbReference type="ChEBI" id="CHEBI:15377"/>
        <dbReference type="ChEBI" id="CHEBI:15378"/>
        <dbReference type="ChEBI" id="CHEBI:37565"/>
        <dbReference type="ChEBI" id="CHEBI:43474"/>
        <dbReference type="ChEBI" id="CHEBI:58189"/>
        <dbReference type="EC" id="3.6.5.2"/>
    </reaction>
    <physiologicalReaction direction="left-to-right" evidence="3">
        <dbReference type="Rhea" id="RHEA:19670"/>
    </physiologicalReaction>
</comment>
<comment type="subunit">
    <text evidence="3">Interacts with tubulin. Interacts with BORCS5; recruits ARL8B to lysosomes. Interacts with VPS41; the interaction mediates the recruitment of the HOPS complex to lysosomes. Interacts (GTP-bound form) with PLEKHM2 (via RUN domain); the interaction is required to recruit the motor protein kinesin-1 on lysosomes. Interacts (GTP-bound form) with PLEKHM1 (via RUN domain); the interaction is required for PLEKHM1 localization to lysosomes and for ARL8B function in delivery and degradation of endocytic and autophagic cargo in lysosomes. PLEKHM1 and PLEKHM2 compete for interaction with ARL8B. Interacts (GTP-bound form) with RUFY1; the interaction is required for RUFY1 endosomal location. When GTP-bound, interacts with RUFY3 and RUFY4, but not with RUFY1, nor RUFY2 (By similarity).</text>
</comment>
<comment type="subcellular location">
    <subcellularLocation>
        <location evidence="3">Late endosome membrane</location>
    </subcellularLocation>
    <subcellularLocation>
        <location evidence="3">Lysosome membrane</location>
    </subcellularLocation>
    <subcellularLocation>
        <location evidence="3">Cytoplasm</location>
        <location evidence="3">Cytoskeleton</location>
        <location evidence="3">Spindle</location>
    </subcellularLocation>
    <subcellularLocation>
        <location evidence="2">Cell projection</location>
        <location evidence="2">Axon</location>
    </subcellularLocation>
    <subcellularLocation>
        <location evidence="2">Synapse</location>
    </subcellularLocation>
    <subcellularLocation>
        <location evidence="3">Cytolytic granule membrane</location>
    </subcellularLocation>
    <subcellularLocation>
        <location evidence="3">Early endosome membrane</location>
    </subcellularLocation>
    <text evidence="2 3">GTP-bound form resides on lysosomal membranes, whereas GDP-bound form is likely associated with microtubular structures. Localizes with microtubules at the spindle mid-zone during mitosis (By similarity). In dendritic cells, localizes to MHC II+ compartments (By similarity).</text>
</comment>
<comment type="PTM">
    <text evidence="3">Ubiquitinated at Lys-141 by RNF167, leading to its degradation.</text>
</comment>
<comment type="similarity">
    <text evidence="4">Belongs to the small GTPase superfamily. Arf family.</text>
</comment>
<keyword id="KW-0131">Cell cycle</keyword>
<keyword id="KW-0132">Cell division</keyword>
<keyword id="KW-0966">Cell projection</keyword>
<keyword id="KW-0159">Chromosome partition</keyword>
<keyword id="KW-0963">Cytoplasm</keyword>
<keyword id="KW-0206">Cytoskeleton</keyword>
<keyword id="KW-0967">Endosome</keyword>
<keyword id="KW-0342">GTP-binding</keyword>
<keyword id="KW-0378">Hydrolase</keyword>
<keyword id="KW-1017">Isopeptide bond</keyword>
<keyword id="KW-0458">Lysosome</keyword>
<keyword id="KW-0472">Membrane</keyword>
<keyword id="KW-0498">Mitosis</keyword>
<keyword id="KW-0547">Nucleotide-binding</keyword>
<keyword id="KW-0653">Protein transport</keyword>
<keyword id="KW-1185">Reference proteome</keyword>
<keyword id="KW-0770">Synapse</keyword>
<keyword id="KW-0813">Transport</keyword>
<keyword id="KW-0832">Ubl conjugation</keyword>
<protein>
    <recommendedName>
        <fullName evidence="4">ADP-ribosylation factor-like protein 8B</fullName>
        <ecNumber evidence="3">3.6.5.2</ecNumber>
    </recommendedName>
</protein>
<dbReference type="EC" id="3.6.5.2" evidence="3"/>
<dbReference type="EMBL" id="BC081947">
    <property type="protein sequence ID" value="AAH81947.1"/>
    <property type="molecule type" value="mRNA"/>
</dbReference>
<dbReference type="RefSeq" id="NP_001019503.1">
    <property type="nucleotide sequence ID" value="NM_001024332.1"/>
</dbReference>
<dbReference type="SMR" id="Q66HA6"/>
<dbReference type="BioGRID" id="271590">
    <property type="interactions" value="1"/>
</dbReference>
<dbReference type="FunCoup" id="Q66HA6">
    <property type="interactions" value="3561"/>
</dbReference>
<dbReference type="IntAct" id="Q66HA6">
    <property type="interactions" value="1"/>
</dbReference>
<dbReference type="STRING" id="10116.ENSRNOP00000071470"/>
<dbReference type="iPTMnet" id="Q66HA6"/>
<dbReference type="PhosphoSitePlus" id="Q66HA6"/>
<dbReference type="SwissPalm" id="Q66HA6"/>
<dbReference type="jPOST" id="Q66HA6"/>
<dbReference type="PaxDb" id="10116-ENSRNOP00000010053"/>
<dbReference type="Ensembl" id="ENSRNOT00000100067.1">
    <property type="protein sequence ID" value="ENSRNOP00000091362.1"/>
    <property type="gene ID" value="ENSRNOG00000055860.2"/>
</dbReference>
<dbReference type="GeneID" id="500282"/>
<dbReference type="KEGG" id="rno:500282"/>
<dbReference type="UCSC" id="RGD:1562830">
    <property type="organism name" value="rat"/>
</dbReference>
<dbReference type="AGR" id="RGD:1562830"/>
<dbReference type="CTD" id="55207"/>
<dbReference type="RGD" id="1562830">
    <property type="gene designation" value="Arl8b"/>
</dbReference>
<dbReference type="eggNOG" id="KOG0075">
    <property type="taxonomic scope" value="Eukaryota"/>
</dbReference>
<dbReference type="GeneTree" id="ENSGT00940000154861"/>
<dbReference type="HOGENOM" id="CLU_040729_10_0_1"/>
<dbReference type="InParanoid" id="Q66HA6"/>
<dbReference type="OMA" id="FRNMWER"/>
<dbReference type="OrthoDB" id="2011769at2759"/>
<dbReference type="PhylomeDB" id="Q66HA6"/>
<dbReference type="TreeFam" id="TF105470"/>
<dbReference type="PRO" id="PR:Q66HA6"/>
<dbReference type="Proteomes" id="UP000002494">
    <property type="component" value="Chromosome 4"/>
</dbReference>
<dbReference type="Bgee" id="ENSRNOG00000055860">
    <property type="expression patterns" value="Expressed in cerebellum and 20 other cell types or tissues"/>
</dbReference>
<dbReference type="GO" id="GO:0030424">
    <property type="term" value="C:axon"/>
    <property type="evidence" value="ECO:0000266"/>
    <property type="project" value="RGD"/>
</dbReference>
<dbReference type="GO" id="GO:1904115">
    <property type="term" value="C:axon cytoplasm"/>
    <property type="evidence" value="ECO:0007669"/>
    <property type="project" value="GOC"/>
</dbReference>
<dbReference type="GO" id="GO:0101004">
    <property type="term" value="C:cytolytic granule membrane"/>
    <property type="evidence" value="ECO:0000266"/>
    <property type="project" value="RGD"/>
</dbReference>
<dbReference type="GO" id="GO:0005737">
    <property type="term" value="C:cytoplasm"/>
    <property type="evidence" value="ECO:0000266"/>
    <property type="project" value="RGD"/>
</dbReference>
<dbReference type="GO" id="GO:0005829">
    <property type="term" value="C:cytosol"/>
    <property type="evidence" value="ECO:0007669"/>
    <property type="project" value="GOC"/>
</dbReference>
<dbReference type="GO" id="GO:0031901">
    <property type="term" value="C:early endosome membrane"/>
    <property type="evidence" value="ECO:0000266"/>
    <property type="project" value="RGD"/>
</dbReference>
<dbReference type="GO" id="GO:0031902">
    <property type="term" value="C:late endosome membrane"/>
    <property type="evidence" value="ECO:0007669"/>
    <property type="project" value="UniProtKB-SubCell"/>
</dbReference>
<dbReference type="GO" id="GO:0005765">
    <property type="term" value="C:lysosomal membrane"/>
    <property type="evidence" value="ECO:0000266"/>
    <property type="project" value="RGD"/>
</dbReference>
<dbReference type="GO" id="GO:0005764">
    <property type="term" value="C:lysosome"/>
    <property type="evidence" value="ECO:0000250"/>
    <property type="project" value="UniProtKB"/>
</dbReference>
<dbReference type="GO" id="GO:0030496">
    <property type="term" value="C:midbody"/>
    <property type="evidence" value="ECO:0000266"/>
    <property type="project" value="RGD"/>
</dbReference>
<dbReference type="GO" id="GO:0051233">
    <property type="term" value="C:spindle midzone"/>
    <property type="evidence" value="ECO:0000266"/>
    <property type="project" value="RGD"/>
</dbReference>
<dbReference type="GO" id="GO:0045202">
    <property type="term" value="C:synapse"/>
    <property type="evidence" value="ECO:0000266"/>
    <property type="project" value="RGD"/>
</dbReference>
<dbReference type="GO" id="GO:0043014">
    <property type="term" value="F:alpha-tubulin binding"/>
    <property type="evidence" value="ECO:0000266"/>
    <property type="project" value="RGD"/>
</dbReference>
<dbReference type="GO" id="GO:0048487">
    <property type="term" value="F:beta-tubulin binding"/>
    <property type="evidence" value="ECO:0000266"/>
    <property type="project" value="RGD"/>
</dbReference>
<dbReference type="GO" id="GO:0003925">
    <property type="term" value="F:G protein activity"/>
    <property type="evidence" value="ECO:0000266"/>
    <property type="project" value="RGD"/>
</dbReference>
<dbReference type="GO" id="GO:0019003">
    <property type="term" value="F:GDP binding"/>
    <property type="evidence" value="ECO:0000266"/>
    <property type="project" value="RGD"/>
</dbReference>
<dbReference type="GO" id="GO:0005525">
    <property type="term" value="F:GTP binding"/>
    <property type="evidence" value="ECO:0000266"/>
    <property type="project" value="RGD"/>
</dbReference>
<dbReference type="GO" id="GO:0003924">
    <property type="term" value="F:GTPase activity"/>
    <property type="evidence" value="ECO:0000266"/>
    <property type="project" value="RGD"/>
</dbReference>
<dbReference type="GO" id="GO:0008089">
    <property type="term" value="P:anterograde axonal transport"/>
    <property type="evidence" value="ECO:0000266"/>
    <property type="project" value="RGD"/>
</dbReference>
<dbReference type="GO" id="GO:0002747">
    <property type="term" value="P:antigen processing and presentation following phagocytosis"/>
    <property type="evidence" value="ECO:0000250"/>
    <property type="project" value="UniProtKB"/>
</dbReference>
<dbReference type="GO" id="GO:0002505">
    <property type="term" value="P:antigen processing and presentation of polysaccharide antigen via MHC class II"/>
    <property type="evidence" value="ECO:0000250"/>
    <property type="project" value="UniProtKB"/>
</dbReference>
<dbReference type="GO" id="GO:0061909">
    <property type="term" value="P:autophagosome-lysosome fusion"/>
    <property type="evidence" value="ECO:0000250"/>
    <property type="project" value="UniProtKB"/>
</dbReference>
<dbReference type="GO" id="GO:1990927">
    <property type="term" value="P:calcium ion regulated lysosome exocytosis"/>
    <property type="evidence" value="ECO:0000250"/>
    <property type="project" value="UniProtKB"/>
</dbReference>
<dbReference type="GO" id="GO:0051301">
    <property type="term" value="P:cell division"/>
    <property type="evidence" value="ECO:0007669"/>
    <property type="project" value="UniProtKB-KW"/>
</dbReference>
<dbReference type="GO" id="GO:0007059">
    <property type="term" value="P:chromosome segregation"/>
    <property type="evidence" value="ECO:0000266"/>
    <property type="project" value="RGD"/>
</dbReference>
<dbReference type="GO" id="GO:0034498">
    <property type="term" value="P:early endosome to Golgi transport"/>
    <property type="evidence" value="ECO:0000266"/>
    <property type="project" value="RGD"/>
</dbReference>
<dbReference type="GO" id="GO:0016197">
    <property type="term" value="P:endosomal transport"/>
    <property type="evidence" value="ECO:0000266"/>
    <property type="project" value="RGD"/>
</dbReference>
<dbReference type="GO" id="GO:0090117">
    <property type="term" value="P:endosome to lysosome transport of low-density lipoprotein particle"/>
    <property type="evidence" value="ECO:0000250"/>
    <property type="project" value="UniProtKB"/>
</dbReference>
<dbReference type="GO" id="GO:1902774">
    <property type="term" value="P:late endosome to lysosome transport"/>
    <property type="evidence" value="ECO:0000250"/>
    <property type="project" value="UniProtKB"/>
</dbReference>
<dbReference type="GO" id="GO:0032418">
    <property type="term" value="P:lysosome localization"/>
    <property type="evidence" value="ECO:0000250"/>
    <property type="project" value="UniProtKB"/>
</dbReference>
<dbReference type="GO" id="GO:0042267">
    <property type="term" value="P:natural killer cell mediated cytotoxicity"/>
    <property type="evidence" value="ECO:0000250"/>
    <property type="project" value="UniProtKB"/>
</dbReference>
<dbReference type="GO" id="GO:0090385">
    <property type="term" value="P:phagosome-lysosome fusion"/>
    <property type="evidence" value="ECO:0000250"/>
    <property type="project" value="UniProtKB"/>
</dbReference>
<dbReference type="GO" id="GO:0001778">
    <property type="term" value="P:plasma membrane repair"/>
    <property type="evidence" value="ECO:0000250"/>
    <property type="project" value="UniProtKB"/>
</dbReference>
<dbReference type="GO" id="GO:1902946">
    <property type="term" value="P:protein localization to early endosome"/>
    <property type="evidence" value="ECO:0000266"/>
    <property type="project" value="RGD"/>
</dbReference>
<dbReference type="GO" id="GO:0015031">
    <property type="term" value="P:protein transport"/>
    <property type="evidence" value="ECO:0007669"/>
    <property type="project" value="UniProtKB-KW"/>
</dbReference>
<dbReference type="GO" id="GO:0046754">
    <property type="term" value="P:viral exocytosis"/>
    <property type="evidence" value="ECO:0000266"/>
    <property type="project" value="RGD"/>
</dbReference>
<dbReference type="CDD" id="cd04159">
    <property type="entry name" value="Arl10_like"/>
    <property type="match status" value="1"/>
</dbReference>
<dbReference type="FunFam" id="3.40.50.300:FF:000247">
    <property type="entry name" value="ADP-ribosylation factor-like GTPase 8A"/>
    <property type="match status" value="1"/>
</dbReference>
<dbReference type="Gene3D" id="3.40.50.300">
    <property type="entry name" value="P-loop containing nucleotide triphosphate hydrolases"/>
    <property type="match status" value="1"/>
</dbReference>
<dbReference type="InterPro" id="IPR044154">
    <property type="entry name" value="Arl8a/8b"/>
</dbReference>
<dbReference type="InterPro" id="IPR027417">
    <property type="entry name" value="P-loop_NTPase"/>
</dbReference>
<dbReference type="InterPro" id="IPR005225">
    <property type="entry name" value="Small_GTP-bd"/>
</dbReference>
<dbReference type="InterPro" id="IPR006689">
    <property type="entry name" value="Small_GTPase_ARF/SAR"/>
</dbReference>
<dbReference type="NCBIfam" id="TIGR00231">
    <property type="entry name" value="small_GTP"/>
    <property type="match status" value="1"/>
</dbReference>
<dbReference type="PANTHER" id="PTHR45732">
    <property type="entry name" value="ADP-RIBOSYLATION FACTOR-LIKE PROTEIN 8"/>
    <property type="match status" value="1"/>
</dbReference>
<dbReference type="PANTHER" id="PTHR45732:SF13">
    <property type="entry name" value="ADP-RIBOSYLATION FACTOR-LIKE PROTEIN 8B"/>
    <property type="match status" value="1"/>
</dbReference>
<dbReference type="Pfam" id="PF00025">
    <property type="entry name" value="Arf"/>
    <property type="match status" value="1"/>
</dbReference>
<dbReference type="PRINTS" id="PR00328">
    <property type="entry name" value="SAR1GTPBP"/>
</dbReference>
<dbReference type="SMART" id="SM00177">
    <property type="entry name" value="ARF"/>
    <property type="match status" value="1"/>
</dbReference>
<dbReference type="SMART" id="SM00175">
    <property type="entry name" value="RAB"/>
    <property type="match status" value="1"/>
</dbReference>
<dbReference type="SMART" id="SM00173">
    <property type="entry name" value="RAS"/>
    <property type="match status" value="1"/>
</dbReference>
<dbReference type="SMART" id="SM00178">
    <property type="entry name" value="SAR"/>
    <property type="match status" value="1"/>
</dbReference>
<dbReference type="SUPFAM" id="SSF52540">
    <property type="entry name" value="P-loop containing nucleoside triphosphate hydrolases"/>
    <property type="match status" value="1"/>
</dbReference>
<dbReference type="PROSITE" id="PS51417">
    <property type="entry name" value="ARF"/>
    <property type="match status" value="1"/>
</dbReference>
<evidence type="ECO:0000250" key="1">
    <source>
        <dbReference type="UniProtKB" id="P62330"/>
    </source>
</evidence>
<evidence type="ECO:0000250" key="2">
    <source>
        <dbReference type="UniProtKB" id="Q9CQW2"/>
    </source>
</evidence>
<evidence type="ECO:0000250" key="3">
    <source>
        <dbReference type="UniProtKB" id="Q9NVJ2"/>
    </source>
</evidence>
<evidence type="ECO:0000305" key="4"/>
<evidence type="ECO:0000312" key="5">
    <source>
        <dbReference type="RGD" id="1562830"/>
    </source>
</evidence>
<sequence length="186" mass="21539">MLALISRLLDWFRSLFWKEEMELTLVGLQYSGKTTFVNVIASGQFSEDMIPTVGFNMRKVTKGNVTIKIWDIGGQPRFRSMWERYCRGVNAIVYMIDAADREKIEASRNELHNLLDKPQLQGIPVLVLGNKRDLPNALDEKQLIEKMNLSAIQDREICCYSISCKEKDNIDITLQWLIQHSKSRRS</sequence>
<gene>
    <name evidence="5" type="primary">Arl8b</name>
</gene>
<accession>Q66HA6</accession>
<feature type="chain" id="PRO_0000232925" description="ADP-ribosylation factor-like protein 8B">
    <location>
        <begin position="1"/>
        <end position="186"/>
    </location>
</feature>
<feature type="intramembrane region" description="Note=Mediates targeting to membranes" evidence="3">
    <location>
        <begin position="1"/>
        <end position="19"/>
    </location>
</feature>
<feature type="binding site" evidence="3">
    <location>
        <begin position="29"/>
        <end position="35"/>
    </location>
    <ligand>
        <name>GTP</name>
        <dbReference type="ChEBI" id="CHEBI:37565"/>
    </ligand>
</feature>
<feature type="binding site" evidence="1">
    <location>
        <begin position="71"/>
        <end position="75"/>
    </location>
    <ligand>
        <name>GTP</name>
        <dbReference type="ChEBI" id="CHEBI:37565"/>
    </ligand>
</feature>
<feature type="binding site" evidence="3">
    <location>
        <begin position="130"/>
        <end position="133"/>
    </location>
    <ligand>
        <name>GTP</name>
        <dbReference type="ChEBI" id="CHEBI:37565"/>
    </ligand>
</feature>
<feature type="cross-link" description="Glycyl lysine isopeptide (Lys-Gly) (interchain with G-Cter in ubiquitin)" evidence="3">
    <location>
        <position position="141"/>
    </location>
</feature>
<name>ARL8B_RAT</name>
<organism>
    <name type="scientific">Rattus norvegicus</name>
    <name type="common">Rat</name>
    <dbReference type="NCBI Taxonomy" id="10116"/>
    <lineage>
        <taxon>Eukaryota</taxon>
        <taxon>Metazoa</taxon>
        <taxon>Chordata</taxon>
        <taxon>Craniata</taxon>
        <taxon>Vertebrata</taxon>
        <taxon>Euteleostomi</taxon>
        <taxon>Mammalia</taxon>
        <taxon>Eutheria</taxon>
        <taxon>Euarchontoglires</taxon>
        <taxon>Glires</taxon>
        <taxon>Rodentia</taxon>
        <taxon>Myomorpha</taxon>
        <taxon>Muroidea</taxon>
        <taxon>Muridae</taxon>
        <taxon>Murinae</taxon>
        <taxon>Rattus</taxon>
    </lineage>
</organism>
<proteinExistence type="evidence at transcript level"/>
<reference key="1">
    <citation type="journal article" date="2004" name="Genome Res.">
        <title>The status, quality, and expansion of the NIH full-length cDNA project: the Mammalian Gene Collection (MGC).</title>
        <authorList>
            <consortium name="The MGC Project Team"/>
        </authorList>
    </citation>
    <scope>NUCLEOTIDE SEQUENCE [LARGE SCALE MRNA]</scope>
    <source>
        <strain>Brown Norway</strain>
        <tissue>Lung</tissue>
    </source>
</reference>